<gene>
    <name evidence="1" type="primary">rpsU</name>
    <name type="ordered locus">Dvul_1366</name>
</gene>
<feature type="chain" id="PRO_1000005114" description="Small ribosomal subunit protein bS21">
    <location>
        <begin position="1"/>
        <end position="67"/>
    </location>
</feature>
<organism>
    <name type="scientific">Nitratidesulfovibrio vulgaris (strain DP4)</name>
    <name type="common">Desulfovibrio vulgaris</name>
    <dbReference type="NCBI Taxonomy" id="391774"/>
    <lineage>
        <taxon>Bacteria</taxon>
        <taxon>Pseudomonadati</taxon>
        <taxon>Thermodesulfobacteriota</taxon>
        <taxon>Desulfovibrionia</taxon>
        <taxon>Desulfovibrionales</taxon>
        <taxon>Desulfovibrionaceae</taxon>
        <taxon>Nitratidesulfovibrio</taxon>
    </lineage>
</organism>
<proteinExistence type="inferred from homology"/>
<name>RS21_NITV4</name>
<comment type="similarity">
    <text evidence="1">Belongs to the bacterial ribosomal protein bS21 family.</text>
</comment>
<reference key="1">
    <citation type="journal article" date="2009" name="Environ. Microbiol.">
        <title>Contribution of mobile genetic elements to Desulfovibrio vulgaris genome plasticity.</title>
        <authorList>
            <person name="Walker C.B."/>
            <person name="Stolyar S."/>
            <person name="Chivian D."/>
            <person name="Pinel N."/>
            <person name="Gabster J.A."/>
            <person name="Dehal P.S."/>
            <person name="He Z."/>
            <person name="Yang Z.K."/>
            <person name="Yen H.C."/>
            <person name="Zhou J."/>
            <person name="Wall J.D."/>
            <person name="Hazen T.C."/>
            <person name="Arkin A.P."/>
            <person name="Stahl D.A."/>
        </authorList>
    </citation>
    <scope>NUCLEOTIDE SEQUENCE [LARGE SCALE GENOMIC DNA]</scope>
    <source>
        <strain>DP4</strain>
    </source>
</reference>
<protein>
    <recommendedName>
        <fullName evidence="1">Small ribosomal subunit protein bS21</fullName>
    </recommendedName>
    <alternativeName>
        <fullName evidence="2">30S ribosomal protein S21</fullName>
    </alternativeName>
</protein>
<sequence>MPGVYLNEDDYNFDIALRRFKKQVEKAGILSEMKKRQHYEKPSVMRKKKKAAARKRLLKKIRKMNMA</sequence>
<accession>A1VD68</accession>
<dbReference type="EMBL" id="CP000527">
    <property type="protein sequence ID" value="ABM28384.1"/>
    <property type="molecule type" value="Genomic_DNA"/>
</dbReference>
<dbReference type="RefSeq" id="WP_010939080.1">
    <property type="nucleotide sequence ID" value="NC_008751.1"/>
</dbReference>
<dbReference type="SMR" id="A1VD68"/>
<dbReference type="KEGG" id="dvl:Dvul_1366"/>
<dbReference type="HOGENOM" id="CLU_159258_1_2_7"/>
<dbReference type="Proteomes" id="UP000009173">
    <property type="component" value="Chromosome"/>
</dbReference>
<dbReference type="GO" id="GO:1990904">
    <property type="term" value="C:ribonucleoprotein complex"/>
    <property type="evidence" value="ECO:0007669"/>
    <property type="project" value="UniProtKB-KW"/>
</dbReference>
<dbReference type="GO" id="GO:0005840">
    <property type="term" value="C:ribosome"/>
    <property type="evidence" value="ECO:0007669"/>
    <property type="project" value="UniProtKB-KW"/>
</dbReference>
<dbReference type="GO" id="GO:0003735">
    <property type="term" value="F:structural constituent of ribosome"/>
    <property type="evidence" value="ECO:0007669"/>
    <property type="project" value="InterPro"/>
</dbReference>
<dbReference type="GO" id="GO:0006412">
    <property type="term" value="P:translation"/>
    <property type="evidence" value="ECO:0007669"/>
    <property type="project" value="UniProtKB-UniRule"/>
</dbReference>
<dbReference type="Gene3D" id="1.20.5.1150">
    <property type="entry name" value="Ribosomal protein S8"/>
    <property type="match status" value="1"/>
</dbReference>
<dbReference type="HAMAP" id="MF_00358">
    <property type="entry name" value="Ribosomal_bS21"/>
    <property type="match status" value="1"/>
</dbReference>
<dbReference type="InterPro" id="IPR001911">
    <property type="entry name" value="Ribosomal_bS21"/>
</dbReference>
<dbReference type="InterPro" id="IPR018278">
    <property type="entry name" value="Ribosomal_bS21_CS"/>
</dbReference>
<dbReference type="InterPro" id="IPR038380">
    <property type="entry name" value="Ribosomal_bS21_sf"/>
</dbReference>
<dbReference type="NCBIfam" id="TIGR00030">
    <property type="entry name" value="S21p"/>
    <property type="match status" value="1"/>
</dbReference>
<dbReference type="PANTHER" id="PTHR21109">
    <property type="entry name" value="MITOCHONDRIAL 28S RIBOSOMAL PROTEIN S21"/>
    <property type="match status" value="1"/>
</dbReference>
<dbReference type="PANTHER" id="PTHR21109:SF22">
    <property type="entry name" value="SMALL RIBOSOMAL SUBUNIT PROTEIN BS21"/>
    <property type="match status" value="1"/>
</dbReference>
<dbReference type="Pfam" id="PF01165">
    <property type="entry name" value="Ribosomal_S21"/>
    <property type="match status" value="1"/>
</dbReference>
<dbReference type="PRINTS" id="PR00976">
    <property type="entry name" value="RIBOSOMALS21"/>
</dbReference>
<dbReference type="PROSITE" id="PS01181">
    <property type="entry name" value="RIBOSOMAL_S21"/>
    <property type="match status" value="1"/>
</dbReference>
<evidence type="ECO:0000255" key="1">
    <source>
        <dbReference type="HAMAP-Rule" id="MF_00358"/>
    </source>
</evidence>
<evidence type="ECO:0000305" key="2"/>
<keyword id="KW-0687">Ribonucleoprotein</keyword>
<keyword id="KW-0689">Ribosomal protein</keyword>